<reference key="1">
    <citation type="journal article" date="2000" name="Appl. Environ. Microbiol.">
        <title>Trehalose synthesis by sequential reactions of recombinant maltooligosyltrehalose synthase and maltooligosyltrehalose trehalohydrolase from Brevibacterium helvolum.</title>
        <authorList>
            <person name="Kim Y.H."/>
            <person name="Kwon T.K."/>
            <person name="Park S."/>
            <person name="Seo H.S."/>
            <person name="Cheong J.J."/>
            <person name="Kim C.H."/>
            <person name="Kim J.K."/>
            <person name="Lee J.S."/>
            <person name="Choi Y.D."/>
        </authorList>
    </citation>
    <scope>NUCLEOTIDE SEQUENCE [GENOMIC DNA]</scope>
    <source>
        <strain>ATCC 11822 / CA3 / IAM 1637</strain>
    </source>
</reference>
<accession>O52520</accession>
<protein>
    <recommendedName>
        <fullName>Malto-oligosyltrehalose trehalohydrolase</fullName>
        <shortName>MTHase</shortName>
        <ecNumber evidence="2">3.2.1.141</ecNumber>
    </recommendedName>
    <alternativeName>
        <fullName>4-alpha-D-((1-&gt;4)-alpha-D-glucano)trehalose trehalohydrolase</fullName>
    </alternativeName>
    <alternativeName>
        <fullName>Maltooligosyl trehalose trehalohydrolase</fullName>
    </alternativeName>
</protein>
<proteinExistence type="inferred from homology"/>
<evidence type="ECO:0000250" key="1"/>
<evidence type="ECO:0000250" key="2">
    <source>
        <dbReference type="UniProtKB" id="Q55088"/>
    </source>
</evidence>
<evidence type="ECO:0000305" key="3"/>
<comment type="catalytic activity">
    <reaction evidence="2">
        <text>hydrolysis of (1-&gt;4)-alpha-D-glucosidic linkage in 4-alpha-D-[(1-&gt;4)-alpha-D-glucanosyl]n trehalose to yield trehalose and (1-&gt;4)-alpha-D-glucan.</text>
        <dbReference type="EC" id="3.2.1.141"/>
    </reaction>
</comment>
<comment type="pathway">
    <text>Glycan biosynthesis; trehalose biosynthesis.</text>
</comment>
<comment type="subcellular location">
    <subcellularLocation>
        <location evidence="1">Cytoplasm</location>
    </subcellularLocation>
</comment>
<comment type="similarity">
    <text evidence="3">Belongs to the glycosyl hydrolase 13 family.</text>
</comment>
<organism>
    <name type="scientific">Brevibacterium helvolum</name>
    <dbReference type="NCBI Taxonomy" id="1704"/>
    <lineage>
        <taxon>Bacteria</taxon>
        <taxon>Bacillati</taxon>
        <taxon>Actinomycetota</taxon>
        <taxon>Actinomycetes</taxon>
        <taxon>Micrococcales</taxon>
        <taxon>Brevibacteriaceae</taxon>
        <taxon>Brevibacterium</taxon>
    </lineage>
</organism>
<feature type="chain" id="PRO_0000054323" description="Malto-oligosyltrehalose trehalohydrolase">
    <location>
        <begin position="1"/>
        <end position="589"/>
    </location>
</feature>
<feature type="active site" description="Nucleophile" evidence="2">
    <location>
        <position position="258"/>
    </location>
</feature>
<feature type="active site" description="Proton donor" evidence="2">
    <location>
        <position position="295"/>
    </location>
</feature>
<feature type="binding site" evidence="2">
    <location>
        <begin position="256"/>
        <end position="261"/>
    </location>
    <ligand>
        <name>substrate</name>
    </ligand>
</feature>
<feature type="binding site" evidence="2">
    <location>
        <begin position="320"/>
        <end position="324"/>
    </location>
    <ligand>
        <name>substrate</name>
    </ligand>
</feature>
<feature type="binding site" evidence="2">
    <location>
        <begin position="390"/>
        <end position="395"/>
    </location>
    <ligand>
        <name>substrate</name>
    </ligand>
</feature>
<feature type="site" description="Transition state stabilizer" evidence="2">
    <location>
        <position position="391"/>
    </location>
</feature>
<gene>
    <name type="primary">treZ</name>
</gene>
<keyword id="KW-0119">Carbohydrate metabolism</keyword>
<keyword id="KW-0963">Cytoplasm</keyword>
<keyword id="KW-0326">Glycosidase</keyword>
<keyword id="KW-0378">Hydrolase</keyword>
<sequence length="589" mass="64217">MTLVNVGPERFDVWAPDVSSVVLVADGRQYPMQKKETAPGSEGWWTASDAPPNGDVDYGYLLDGNTTPVPEPRSRRLPAGVHNHSRTYNPPPYRWQDSRWRGKELQGTLIYQLHVGTSTPDGTLDAAGEKLSYLVDLGIDFIELLPVNGFNGTHNWGYDGVQWYTVHEGYGGPAAYQRFVDAAHAAGLGVIQDVVYNHLGLRGNYFPKLGPNLKQGDANTLGDSVNLDGAGSDVFREYILDNAALWVGDYHVDGVGFDAVHAVRDERAVHILEDLGALGDAISGETGLPKTLIAESDFNNPRLIYPRDVNGYGLAGQWSDDFHTAVHVSVSGETTGYYSDFESLAVLAKVLKDGFLHDGSYSSFRGRHHGRPINPSLANPAALVVCNQNHDQIGNRATGDRLSQSLSYGQLAVAAVLTLTSPFTPMLFMGEEYGASTPWQFFTSHPEPELGKATAEGRIKEFERMGWDPAVVPDPQDPETFNRSKLDWSEASTGDHARLLELYKSLTALRREHPDLADLGFGQTEVSFDDDAGWLRFRPVSVEVLVNLSDAKVRLDDAAGDLLLATDEGNPLDGGSLALVPWSAAVLKS</sequence>
<name>TREZ_BREHE</name>
<dbReference type="EC" id="3.2.1.141" evidence="2"/>
<dbReference type="EMBL" id="AF039919">
    <property type="protein sequence ID" value="AAB95369.1"/>
    <property type="molecule type" value="Genomic_DNA"/>
</dbReference>
<dbReference type="SMR" id="O52520"/>
<dbReference type="CAZy" id="CBM48">
    <property type="family name" value="Carbohydrate-Binding Module Family 48"/>
</dbReference>
<dbReference type="CAZy" id="GH13">
    <property type="family name" value="Glycoside Hydrolase Family 13"/>
</dbReference>
<dbReference type="BRENDA" id="3.2.1.141">
    <property type="organism ID" value="964"/>
</dbReference>
<dbReference type="UniPathway" id="UPA00299"/>
<dbReference type="GO" id="GO:0005737">
    <property type="term" value="C:cytoplasm"/>
    <property type="evidence" value="ECO:0007669"/>
    <property type="project" value="UniProtKB-SubCell"/>
</dbReference>
<dbReference type="GO" id="GO:0033942">
    <property type="term" value="F:4-alpha-D-(1-&gt;4)-alpha-D-glucanotrehalose trehalohydrolase activity"/>
    <property type="evidence" value="ECO:0007669"/>
    <property type="project" value="UniProtKB-EC"/>
</dbReference>
<dbReference type="GO" id="GO:0005992">
    <property type="term" value="P:trehalose biosynthetic process"/>
    <property type="evidence" value="ECO:0007669"/>
    <property type="project" value="UniProtKB-UniPathway"/>
</dbReference>
<dbReference type="CDD" id="cd11325">
    <property type="entry name" value="AmyAc_GTHase"/>
    <property type="match status" value="1"/>
</dbReference>
<dbReference type="CDD" id="cd02853">
    <property type="entry name" value="E_set_MTHase_like_N"/>
    <property type="match status" value="1"/>
</dbReference>
<dbReference type="Gene3D" id="1.10.10.760">
    <property type="entry name" value="E-set domains of sugar-utilizing enzymes"/>
    <property type="match status" value="1"/>
</dbReference>
<dbReference type="Gene3D" id="3.20.20.80">
    <property type="entry name" value="Glycosidases"/>
    <property type="match status" value="1"/>
</dbReference>
<dbReference type="Gene3D" id="2.60.40.10">
    <property type="entry name" value="Immunoglobulins"/>
    <property type="match status" value="1"/>
</dbReference>
<dbReference type="InterPro" id="IPR022567">
    <property type="entry name" value="DUF3459"/>
</dbReference>
<dbReference type="InterPro" id="IPR006047">
    <property type="entry name" value="Glyco_hydro_13_cat_dom"/>
</dbReference>
<dbReference type="InterPro" id="IPR017853">
    <property type="entry name" value="Glycoside_hydrolase_SF"/>
</dbReference>
<dbReference type="InterPro" id="IPR013783">
    <property type="entry name" value="Ig-like_fold"/>
</dbReference>
<dbReference type="InterPro" id="IPR014756">
    <property type="entry name" value="Ig_E-set"/>
</dbReference>
<dbReference type="InterPro" id="IPR012768">
    <property type="entry name" value="Trehalose_TreZ"/>
</dbReference>
<dbReference type="InterPro" id="IPR044901">
    <property type="entry name" value="Trehalose_TreZ_E-set_sf"/>
</dbReference>
<dbReference type="NCBIfam" id="TIGR02402">
    <property type="entry name" value="trehalose_TreZ"/>
    <property type="match status" value="1"/>
</dbReference>
<dbReference type="PANTHER" id="PTHR43002">
    <property type="entry name" value="GLYCOGEN DEBRANCHING ENZYME"/>
    <property type="match status" value="1"/>
</dbReference>
<dbReference type="Pfam" id="PF00128">
    <property type="entry name" value="Alpha-amylase"/>
    <property type="match status" value="1"/>
</dbReference>
<dbReference type="Pfam" id="PF11941">
    <property type="entry name" value="DUF3459"/>
    <property type="match status" value="1"/>
</dbReference>
<dbReference type="PIRSF" id="PIRSF006337">
    <property type="entry name" value="Trehalose_TreZ"/>
    <property type="match status" value="1"/>
</dbReference>
<dbReference type="SMART" id="SM00642">
    <property type="entry name" value="Aamy"/>
    <property type="match status" value="1"/>
</dbReference>
<dbReference type="SUPFAM" id="SSF51445">
    <property type="entry name" value="(Trans)glycosidases"/>
    <property type="match status" value="1"/>
</dbReference>
<dbReference type="SUPFAM" id="SSF81296">
    <property type="entry name" value="E set domains"/>
    <property type="match status" value="1"/>
</dbReference>